<proteinExistence type="inferred from homology"/>
<evidence type="ECO:0000250" key="1"/>
<evidence type="ECO:0000250" key="2">
    <source>
        <dbReference type="UniProtKB" id="Q5JTV8"/>
    </source>
</evidence>
<evidence type="ECO:0000250" key="3">
    <source>
        <dbReference type="UniProtKB" id="Q5PQX1"/>
    </source>
</evidence>
<evidence type="ECO:0000250" key="4">
    <source>
        <dbReference type="UniProtKB" id="Q921T2"/>
    </source>
</evidence>
<evidence type="ECO:0000255" key="5"/>
<evidence type="ECO:0000256" key="6">
    <source>
        <dbReference type="SAM" id="MobiDB-lite"/>
    </source>
</evidence>
<evidence type="ECO:0000305" key="7"/>
<accession>F1N4E5</accession>
<reference key="1">
    <citation type="journal article" date="2009" name="Genome Biol.">
        <title>A whole-genome assembly of the domestic cow, Bos taurus.</title>
        <authorList>
            <person name="Zimin A.V."/>
            <person name="Delcher A.L."/>
            <person name="Florea L."/>
            <person name="Kelley D.R."/>
            <person name="Schatz M.C."/>
            <person name="Puiu D."/>
            <person name="Hanrahan F."/>
            <person name="Pertea G."/>
            <person name="Van Tassell C.P."/>
            <person name="Sonstegard T.S."/>
            <person name="Marcais G."/>
            <person name="Roberts M."/>
            <person name="Subramanian P."/>
            <person name="Yorke J.A."/>
            <person name="Salzberg S.L."/>
        </authorList>
    </citation>
    <scope>NUCLEOTIDE SEQUENCE [LARGE SCALE GENOMIC DNA]</scope>
    <source>
        <strain>Hereford</strain>
    </source>
</reference>
<feature type="chain" id="PRO_0000417025" description="Torsin-1A-interacting protein 1">
    <location>
        <begin position="1"/>
        <end position="600"/>
    </location>
</feature>
<feature type="topological domain" description="Nuclear" evidence="5">
    <location>
        <begin position="1"/>
        <end position="354"/>
    </location>
</feature>
<feature type="transmembrane region" description="Helical" evidence="5">
    <location>
        <begin position="355"/>
        <end position="371"/>
    </location>
</feature>
<feature type="topological domain" description="Perinuclear space" evidence="5">
    <location>
        <begin position="372"/>
        <end position="600"/>
    </location>
</feature>
<feature type="region of interest" description="Disordered" evidence="6">
    <location>
        <begin position="1"/>
        <end position="261"/>
    </location>
</feature>
<feature type="region of interest" description="Disordered" evidence="6">
    <location>
        <begin position="310"/>
        <end position="346"/>
    </location>
</feature>
<feature type="region of interest" description="Interaction with TOR1A" evidence="1">
    <location>
        <begin position="373"/>
        <end position="600"/>
    </location>
</feature>
<feature type="coiled-coil region" evidence="5">
    <location>
        <begin position="376"/>
        <end position="452"/>
    </location>
</feature>
<feature type="compositionally biased region" description="Basic and acidic residues" evidence="6">
    <location>
        <begin position="1"/>
        <end position="14"/>
    </location>
</feature>
<feature type="compositionally biased region" description="Basic and acidic residues" evidence="6">
    <location>
        <begin position="71"/>
        <end position="81"/>
    </location>
</feature>
<feature type="compositionally biased region" description="Basic and acidic residues" evidence="6">
    <location>
        <begin position="91"/>
        <end position="102"/>
    </location>
</feature>
<feature type="compositionally biased region" description="Basic and acidic residues" evidence="6">
    <location>
        <begin position="116"/>
        <end position="125"/>
    </location>
</feature>
<feature type="compositionally biased region" description="Low complexity" evidence="6">
    <location>
        <begin position="192"/>
        <end position="203"/>
    </location>
</feature>
<feature type="compositionally biased region" description="Acidic residues" evidence="6">
    <location>
        <begin position="219"/>
        <end position="232"/>
    </location>
</feature>
<feature type="compositionally biased region" description="Polar residues" evidence="6">
    <location>
        <begin position="247"/>
        <end position="261"/>
    </location>
</feature>
<feature type="compositionally biased region" description="Polar residues" evidence="6">
    <location>
        <begin position="325"/>
        <end position="346"/>
    </location>
</feature>
<feature type="modified residue" description="Phosphoserine" evidence="4">
    <location>
        <position position="61"/>
    </location>
</feature>
<feature type="modified residue" description="Phosphoserine" evidence="2">
    <location>
        <position position="137"/>
    </location>
</feature>
<feature type="modified residue" description="Phosphoserine" evidence="2">
    <location>
        <position position="145"/>
    </location>
</feature>
<feature type="modified residue" description="Phosphoserine" evidence="2">
    <location>
        <position position="156"/>
    </location>
</feature>
<feature type="modified residue" description="Phosphoserine" evidence="2">
    <location>
        <position position="158"/>
    </location>
</feature>
<feature type="modified residue" description="Phosphoserine" evidence="2">
    <location>
        <position position="159"/>
    </location>
</feature>
<feature type="modified residue" description="Phosphoserine" evidence="2">
    <location>
        <position position="189"/>
    </location>
</feature>
<feature type="modified residue" description="Phosphothreonine" evidence="2">
    <location>
        <position position="223"/>
    </location>
</feature>
<feature type="modified residue" description="Phosphoserine" evidence="2">
    <location>
        <position position="230"/>
    </location>
</feature>
<feature type="modified residue" description="Phosphoserine" evidence="3">
    <location>
        <position position="233"/>
    </location>
</feature>
<feature type="modified residue" description="Phosphoserine" evidence="3">
    <location>
        <position position="244"/>
    </location>
</feature>
<feature type="modified residue" description="Phosphoserine" evidence="2">
    <location>
        <position position="322"/>
    </location>
</feature>
<feature type="modified residue" description="Phosphoserine" evidence="2">
    <location>
        <position position="332"/>
    </location>
</feature>
<feature type="glycosylation site" description="N-linked (GlcNAc...) asparagine" evidence="5">
    <location>
        <position position="416"/>
    </location>
</feature>
<feature type="cross-link" description="Glycyl lysine isopeptide (Lys-Gly) (interchain with G-Cter in SUMO2)" evidence="2">
    <location>
        <position position="325"/>
    </location>
</feature>
<keyword id="KW-0175">Coiled coil</keyword>
<keyword id="KW-0325">Glycoprotein</keyword>
<keyword id="KW-1017">Isopeptide bond</keyword>
<keyword id="KW-0472">Membrane</keyword>
<keyword id="KW-0539">Nucleus</keyword>
<keyword id="KW-0597">Phosphoprotein</keyword>
<keyword id="KW-1185">Reference proteome</keyword>
<keyword id="KW-0812">Transmembrane</keyword>
<keyword id="KW-1133">Transmembrane helix</keyword>
<keyword id="KW-0832">Ubl conjugation</keyword>
<protein>
    <recommendedName>
        <fullName>Torsin-1A-interacting protein 1</fullName>
    </recommendedName>
    <alternativeName>
        <fullName>Lamin-associated protein 1B</fullName>
        <shortName>LAP1B</shortName>
    </alternativeName>
</protein>
<gene>
    <name type="primary">TOR1AIP1</name>
</gene>
<dbReference type="EMBL" id="DAAA02043477">
    <property type="status" value="NOT_ANNOTATED_CDS"/>
    <property type="molecule type" value="Genomic_DNA"/>
</dbReference>
<dbReference type="RefSeq" id="NP_001422001.1">
    <property type="nucleotide sequence ID" value="NM_001435072.1"/>
</dbReference>
<dbReference type="SMR" id="F1N4E5"/>
<dbReference type="FunCoup" id="F1N4E5">
    <property type="interactions" value="1379"/>
</dbReference>
<dbReference type="STRING" id="9913.ENSBTAP00000058541"/>
<dbReference type="GlyCosmos" id="F1N4E5">
    <property type="glycosylation" value="1 site, No reported glycans"/>
</dbReference>
<dbReference type="GlyGen" id="F1N4E5">
    <property type="glycosylation" value="1 site"/>
</dbReference>
<dbReference type="PaxDb" id="9913-ENSBTAP00000033870"/>
<dbReference type="Ensembl" id="ENSBTAT00000033967.6">
    <property type="protein sequence ID" value="ENSBTAP00000033870.4"/>
    <property type="gene ID" value="ENSBTAG00000035226.5"/>
</dbReference>
<dbReference type="GeneID" id="782528"/>
<dbReference type="VEuPathDB" id="HostDB:ENSBTAG00000035226"/>
<dbReference type="VGNC" id="VGNC:36224">
    <property type="gene designation" value="TOR1AIP1"/>
</dbReference>
<dbReference type="eggNOG" id="ENOG502QUV7">
    <property type="taxonomic scope" value="Eukaryota"/>
</dbReference>
<dbReference type="GeneTree" id="ENSGT00390000012166"/>
<dbReference type="HOGENOM" id="CLU_034263_0_1_1"/>
<dbReference type="InParanoid" id="F1N4E5"/>
<dbReference type="OrthoDB" id="6258998at2759"/>
<dbReference type="TreeFam" id="TF329438"/>
<dbReference type="Reactome" id="R-BTA-9013405">
    <property type="pathway name" value="RHOD GTPase cycle"/>
</dbReference>
<dbReference type="Reactome" id="R-BTA-9035034">
    <property type="pathway name" value="RHOF GTPase cycle"/>
</dbReference>
<dbReference type="Proteomes" id="UP000009136">
    <property type="component" value="Chromosome 16"/>
</dbReference>
<dbReference type="Bgee" id="ENSBTAG00000035226">
    <property type="expression patterns" value="Expressed in spermatid and 104 other cell types or tissues"/>
</dbReference>
<dbReference type="GO" id="GO:0005637">
    <property type="term" value="C:nuclear inner membrane"/>
    <property type="evidence" value="ECO:0007669"/>
    <property type="project" value="UniProtKB-SubCell"/>
</dbReference>
<dbReference type="GO" id="GO:0031965">
    <property type="term" value="C:nuclear membrane"/>
    <property type="evidence" value="ECO:0000318"/>
    <property type="project" value="GO_Central"/>
</dbReference>
<dbReference type="GO" id="GO:0005634">
    <property type="term" value="C:nucleus"/>
    <property type="evidence" value="ECO:0000250"/>
    <property type="project" value="UniProtKB"/>
</dbReference>
<dbReference type="GO" id="GO:0001671">
    <property type="term" value="F:ATPase activator activity"/>
    <property type="evidence" value="ECO:0000250"/>
    <property type="project" value="UniProtKB"/>
</dbReference>
<dbReference type="GO" id="GO:0071763">
    <property type="term" value="P:nuclear membrane organization"/>
    <property type="evidence" value="ECO:0000318"/>
    <property type="project" value="GO_Central"/>
</dbReference>
<dbReference type="GO" id="GO:0032781">
    <property type="term" value="P:positive regulation of ATP-dependent activity"/>
    <property type="evidence" value="ECO:0000250"/>
    <property type="project" value="UniProtKB"/>
</dbReference>
<dbReference type="GO" id="GO:0034504">
    <property type="term" value="P:protein localization to nucleus"/>
    <property type="evidence" value="ECO:0000250"/>
    <property type="project" value="UniProtKB"/>
</dbReference>
<dbReference type="FunFam" id="3.40.50.12190:FF:000001">
    <property type="entry name" value="torsin-1A-interacting protein 1 isoform X1"/>
    <property type="match status" value="1"/>
</dbReference>
<dbReference type="Gene3D" id="3.40.50.12190">
    <property type="match status" value="1"/>
</dbReference>
<dbReference type="InterPro" id="IPR038599">
    <property type="entry name" value="LAP1C-like_C_sf"/>
</dbReference>
<dbReference type="InterPro" id="IPR008662">
    <property type="entry name" value="TOIP1/2"/>
</dbReference>
<dbReference type="InterPro" id="IPR046753">
    <property type="entry name" value="TOIP1/2_C"/>
</dbReference>
<dbReference type="InterPro" id="IPR046754">
    <property type="entry name" value="TOIP1/2_N"/>
</dbReference>
<dbReference type="PANTHER" id="PTHR18843">
    <property type="entry name" value="TORSIN-1A-INTERACTING PROTEIN"/>
    <property type="match status" value="1"/>
</dbReference>
<dbReference type="PANTHER" id="PTHR18843:SF6">
    <property type="entry name" value="TORSIN-1A-INTERACTING PROTEIN 1"/>
    <property type="match status" value="1"/>
</dbReference>
<dbReference type="Pfam" id="PF05609">
    <property type="entry name" value="LAP1_C"/>
    <property type="match status" value="1"/>
</dbReference>
<dbReference type="Pfam" id="PF20443">
    <property type="entry name" value="LAP1_N"/>
    <property type="match status" value="1"/>
</dbReference>
<comment type="function">
    <text evidence="1">Required for nuclear membrane integrity. Induces TOR1A and TOR1B ATPase activity and is required for their location on the nuclear membrane. Binds to A- and B-type lamins. Possible role in membrane attachment and assembly of the nuclear lamina (By similarity).</text>
</comment>
<comment type="subunit">
    <text evidence="1">Interacts with ATP1B4. Interacts with TOR1A (ATP-bound). Interacts with TOR1B, TOR2A and TOR3A. Interacts with VIM (By similarity).</text>
</comment>
<comment type="subcellular location">
    <subcellularLocation>
        <location evidence="1">Nucleus inner membrane</location>
        <topology evidence="1">Single-pass membrane protein</topology>
    </subcellularLocation>
</comment>
<comment type="similarity">
    <text evidence="7">Belongs to the TOR1AIP family.</text>
</comment>
<organism>
    <name type="scientific">Bos taurus</name>
    <name type="common">Bovine</name>
    <dbReference type="NCBI Taxonomy" id="9913"/>
    <lineage>
        <taxon>Eukaryota</taxon>
        <taxon>Metazoa</taxon>
        <taxon>Chordata</taxon>
        <taxon>Craniata</taxon>
        <taxon>Vertebrata</taxon>
        <taxon>Euteleostomi</taxon>
        <taxon>Mammalia</taxon>
        <taxon>Eutheria</taxon>
        <taxon>Laurasiatheria</taxon>
        <taxon>Artiodactyla</taxon>
        <taxon>Ruminantia</taxon>
        <taxon>Pecora</taxon>
        <taxon>Bovidae</taxon>
        <taxon>Bovinae</taxon>
        <taxon>Bos</taxon>
    </lineage>
</organism>
<name>TOIP1_BOVIN</name>
<sequence length="600" mass="67468">MAGEGQRAEPEREGWALYVTPRAPLREGRPRLAPQNGGSGDVPAYGTPTPSRHGRREVRFSEEPPEVYGDFEPRAAKEKARVGRQIPLEGFRPDSAKEEVRESAYYLRSRQRRQPRLHEAEEMQTRRAALLQQQPHSPPPPLRPSPVTTRRGLRDSHSSEEDEPPSQTVLSQTVTKKAIRRTQETPVMSEDPLISLRRPPLRSSRSEAASVQQKVNFLEEGETEENDQDSFDSDVTVKVRSGDSVESGDQTTRSSSQYKESFWQSSQSGDFTAFDEQPLKLSSGYQKTPQEWAEKTVRIRTRMLTSSPGMRSIYGSFSDDDSVQKSELGNQSPSTSNQQMTGQPKSVSSVKTKRYWPFAVIAALLIGGFLYTRPPEAETTAVQEFQNQMKQLMNKYQGQDEKLWKRSQTFLEKHLNGSQSRPQPAILLLTAARDAEEALRCLSEQIADAYSSFRSVPAIRIDGASKATRDSDTVKEEVDQELSNGFRNGQNAAVVHRFESLPAGSTLIFYKYCDHESAAFKDVALVLTVLLEEETLGTSLGLKEIEEKVRDFLQVKFTNSDTPNSYKHMDPDKLSGLWSRISHLVLPVQPENDLKKGICL</sequence>